<keyword id="KW-0342">GTP-binding</keyword>
<keyword id="KW-0547">Nucleotide-binding</keyword>
<keyword id="KW-1185">Reference proteome</keyword>
<keyword id="KW-0677">Repeat</keyword>
<keyword id="KW-0690">Ribosome biogenesis</keyword>
<comment type="function">
    <text evidence="1">GTPase that plays an essential role in the late steps of ribosome biogenesis.</text>
</comment>
<comment type="subunit">
    <text evidence="1">Associates with the 50S ribosomal subunit.</text>
</comment>
<comment type="similarity">
    <text evidence="1">Belongs to the TRAFAC class TrmE-Era-EngA-EngB-Septin-like GTPase superfamily. EngA (Der) GTPase family.</text>
</comment>
<organism>
    <name type="scientific">Leuconostoc citreum (strain KM20)</name>
    <dbReference type="NCBI Taxonomy" id="349519"/>
    <lineage>
        <taxon>Bacteria</taxon>
        <taxon>Bacillati</taxon>
        <taxon>Bacillota</taxon>
        <taxon>Bacilli</taxon>
        <taxon>Lactobacillales</taxon>
        <taxon>Lactobacillaceae</taxon>
        <taxon>Leuconostoc</taxon>
    </lineage>
</organism>
<evidence type="ECO:0000255" key="1">
    <source>
        <dbReference type="HAMAP-Rule" id="MF_00195"/>
    </source>
</evidence>
<protein>
    <recommendedName>
        <fullName evidence="1">GTPase Der</fullName>
    </recommendedName>
    <alternativeName>
        <fullName evidence="1">GTP-binding protein EngA</fullName>
    </alternativeName>
</protein>
<dbReference type="EMBL" id="DQ489736">
    <property type="protein sequence ID" value="ACA82517.1"/>
    <property type="molecule type" value="Genomic_DNA"/>
</dbReference>
<dbReference type="RefSeq" id="WP_004899868.1">
    <property type="nucleotide sequence ID" value="NC_010471.1"/>
</dbReference>
<dbReference type="SMR" id="B1MYB5"/>
<dbReference type="STRING" id="349519.LCK_00685"/>
<dbReference type="KEGG" id="lci:LCK_00685"/>
<dbReference type="eggNOG" id="COG1160">
    <property type="taxonomic scope" value="Bacteria"/>
</dbReference>
<dbReference type="HOGENOM" id="CLU_016077_6_2_9"/>
<dbReference type="OrthoDB" id="9805918at2"/>
<dbReference type="Proteomes" id="UP000002166">
    <property type="component" value="Chromosome"/>
</dbReference>
<dbReference type="GO" id="GO:0005525">
    <property type="term" value="F:GTP binding"/>
    <property type="evidence" value="ECO:0007669"/>
    <property type="project" value="UniProtKB-UniRule"/>
</dbReference>
<dbReference type="GO" id="GO:0043022">
    <property type="term" value="F:ribosome binding"/>
    <property type="evidence" value="ECO:0007669"/>
    <property type="project" value="TreeGrafter"/>
</dbReference>
<dbReference type="GO" id="GO:0042254">
    <property type="term" value="P:ribosome biogenesis"/>
    <property type="evidence" value="ECO:0007669"/>
    <property type="project" value="UniProtKB-KW"/>
</dbReference>
<dbReference type="CDD" id="cd01894">
    <property type="entry name" value="EngA1"/>
    <property type="match status" value="1"/>
</dbReference>
<dbReference type="CDD" id="cd01895">
    <property type="entry name" value="EngA2"/>
    <property type="match status" value="1"/>
</dbReference>
<dbReference type="FunFam" id="3.30.300.20:FF:000004">
    <property type="entry name" value="GTPase Der"/>
    <property type="match status" value="1"/>
</dbReference>
<dbReference type="FunFam" id="3.40.50.300:FF:000040">
    <property type="entry name" value="GTPase Der"/>
    <property type="match status" value="1"/>
</dbReference>
<dbReference type="FunFam" id="3.40.50.300:FF:000057">
    <property type="entry name" value="GTPase Der"/>
    <property type="match status" value="1"/>
</dbReference>
<dbReference type="Gene3D" id="3.30.300.20">
    <property type="match status" value="1"/>
</dbReference>
<dbReference type="Gene3D" id="3.40.50.300">
    <property type="entry name" value="P-loop containing nucleotide triphosphate hydrolases"/>
    <property type="match status" value="2"/>
</dbReference>
<dbReference type="HAMAP" id="MF_00195">
    <property type="entry name" value="GTPase_Der"/>
    <property type="match status" value="1"/>
</dbReference>
<dbReference type="InterPro" id="IPR031166">
    <property type="entry name" value="G_ENGA"/>
</dbReference>
<dbReference type="InterPro" id="IPR006073">
    <property type="entry name" value="GTP-bd"/>
</dbReference>
<dbReference type="InterPro" id="IPR016484">
    <property type="entry name" value="GTPase_Der"/>
</dbReference>
<dbReference type="InterPro" id="IPR032859">
    <property type="entry name" value="KH_dom-like"/>
</dbReference>
<dbReference type="InterPro" id="IPR015946">
    <property type="entry name" value="KH_dom-like_a/b"/>
</dbReference>
<dbReference type="InterPro" id="IPR027417">
    <property type="entry name" value="P-loop_NTPase"/>
</dbReference>
<dbReference type="InterPro" id="IPR005225">
    <property type="entry name" value="Small_GTP-bd"/>
</dbReference>
<dbReference type="NCBIfam" id="TIGR03594">
    <property type="entry name" value="GTPase_EngA"/>
    <property type="match status" value="1"/>
</dbReference>
<dbReference type="NCBIfam" id="TIGR00231">
    <property type="entry name" value="small_GTP"/>
    <property type="match status" value="2"/>
</dbReference>
<dbReference type="PANTHER" id="PTHR43834">
    <property type="entry name" value="GTPASE DER"/>
    <property type="match status" value="1"/>
</dbReference>
<dbReference type="PANTHER" id="PTHR43834:SF6">
    <property type="entry name" value="GTPASE DER"/>
    <property type="match status" value="1"/>
</dbReference>
<dbReference type="Pfam" id="PF14714">
    <property type="entry name" value="KH_dom-like"/>
    <property type="match status" value="1"/>
</dbReference>
<dbReference type="Pfam" id="PF01926">
    <property type="entry name" value="MMR_HSR1"/>
    <property type="match status" value="2"/>
</dbReference>
<dbReference type="PIRSF" id="PIRSF006485">
    <property type="entry name" value="GTP-binding_EngA"/>
    <property type="match status" value="1"/>
</dbReference>
<dbReference type="PRINTS" id="PR00326">
    <property type="entry name" value="GTP1OBG"/>
</dbReference>
<dbReference type="SUPFAM" id="SSF52540">
    <property type="entry name" value="P-loop containing nucleoside triphosphate hydrolases"/>
    <property type="match status" value="2"/>
</dbReference>
<dbReference type="PROSITE" id="PS51712">
    <property type="entry name" value="G_ENGA"/>
    <property type="match status" value="2"/>
</dbReference>
<sequence length="437" mass="48719">MAAPVVAIVGRPNVGKSTIFNRMAGERIAIVEDKPGVTRDRLYAPAEWLNYEFRMIDTGGIELGDEPFLAEIRAQVELAIDEADVIVMVASGREGVTAADEVVAKMLYKTDKPVILAVNKVDNPEMRQDIYDFYSLGLGDLFPVSGSHGLGLGDLLDAVVKHFPDEAAEQEDDGAIRFSIIGRPNVGKSSIVNAMLGEDRVIVSDIEGTTRDAIDSRFVTAEGDEFIMVDTAGMRKRGKVYENTEKYSVMRALKAIDNSNVILMVLDAEAGIREQDKHVAGFAHDAGRAMIIIVNKWDAIEKDGHTMKEFENLIRSEFKFLDYAPIMFVSAKTGQRLDRIPQLVKDVDDNHRKRISSSTLNDVIMDAIAVNPTPTDNGRRLRVYYATQVAIQPPTFVIFVNDVELMHFSYERFLENKIREAFDFTGTPIKLIVRARK</sequence>
<accession>B1MYB5</accession>
<proteinExistence type="inferred from homology"/>
<feature type="chain" id="PRO_1000099138" description="GTPase Der">
    <location>
        <begin position="1"/>
        <end position="437"/>
    </location>
</feature>
<feature type="domain" description="EngA-type G 1">
    <location>
        <begin position="4"/>
        <end position="167"/>
    </location>
</feature>
<feature type="domain" description="EngA-type G 2">
    <location>
        <begin position="176"/>
        <end position="352"/>
    </location>
</feature>
<feature type="domain" description="KH-like" evidence="1">
    <location>
        <begin position="353"/>
        <end position="437"/>
    </location>
</feature>
<feature type="binding site" evidence="1">
    <location>
        <begin position="10"/>
        <end position="17"/>
    </location>
    <ligand>
        <name>GTP</name>
        <dbReference type="ChEBI" id="CHEBI:37565"/>
        <label>1</label>
    </ligand>
</feature>
<feature type="binding site" evidence="1">
    <location>
        <begin position="57"/>
        <end position="61"/>
    </location>
    <ligand>
        <name>GTP</name>
        <dbReference type="ChEBI" id="CHEBI:37565"/>
        <label>1</label>
    </ligand>
</feature>
<feature type="binding site" evidence="1">
    <location>
        <begin position="119"/>
        <end position="122"/>
    </location>
    <ligand>
        <name>GTP</name>
        <dbReference type="ChEBI" id="CHEBI:37565"/>
        <label>1</label>
    </ligand>
</feature>
<feature type="binding site" evidence="1">
    <location>
        <begin position="182"/>
        <end position="189"/>
    </location>
    <ligand>
        <name>GTP</name>
        <dbReference type="ChEBI" id="CHEBI:37565"/>
        <label>2</label>
    </ligand>
</feature>
<feature type="binding site" evidence="1">
    <location>
        <begin position="230"/>
        <end position="234"/>
    </location>
    <ligand>
        <name>GTP</name>
        <dbReference type="ChEBI" id="CHEBI:37565"/>
        <label>2</label>
    </ligand>
</feature>
<feature type="binding site" evidence="1">
    <location>
        <begin position="295"/>
        <end position="298"/>
    </location>
    <ligand>
        <name>GTP</name>
        <dbReference type="ChEBI" id="CHEBI:37565"/>
        <label>2</label>
    </ligand>
</feature>
<name>DER_LEUCK</name>
<gene>
    <name evidence="1" type="primary">der</name>
    <name type="synonym">engA</name>
    <name type="ordered locus">LCK_00685</name>
</gene>
<reference key="1">
    <citation type="journal article" date="2008" name="J. Bacteriol.">
        <title>Complete genome sequence of Leuconostoc citreum KM20.</title>
        <authorList>
            <person name="Kim J.F."/>
            <person name="Jeong H."/>
            <person name="Lee J.-S."/>
            <person name="Choi S.-H."/>
            <person name="Ha M."/>
            <person name="Hur C.-G."/>
            <person name="Kim J.-S."/>
            <person name="Lee S."/>
            <person name="Park H.-S."/>
            <person name="Park Y.-H."/>
            <person name="Oh T.K."/>
        </authorList>
    </citation>
    <scope>NUCLEOTIDE SEQUENCE [LARGE SCALE GENOMIC DNA]</scope>
    <source>
        <strain>KM20</strain>
    </source>
</reference>